<comment type="catalytic activity">
    <reaction evidence="3">
        <text>2 acetyl-CoA = acetoacetyl-CoA + CoA</text>
        <dbReference type="Rhea" id="RHEA:21036"/>
        <dbReference type="ChEBI" id="CHEBI:57286"/>
        <dbReference type="ChEBI" id="CHEBI:57287"/>
        <dbReference type="ChEBI" id="CHEBI:57288"/>
        <dbReference type="EC" id="2.3.1.9"/>
    </reaction>
</comment>
<comment type="pathway">
    <text evidence="4">Biopolymer metabolism; poly-(R)-3-hydroxybutanoate biosynthesis.</text>
</comment>
<comment type="pathway">
    <text>Metabolic intermediate biosynthesis; (R)-mevalonate biosynthesis; (R)-mevalonate from acetyl-CoA: step 1/3.</text>
</comment>
<comment type="subunit">
    <text evidence="2">Homotetramer.</text>
</comment>
<comment type="subcellular location">
    <subcellularLocation>
        <location>Cytoplasm</location>
    </subcellularLocation>
</comment>
<comment type="similarity">
    <text evidence="6">Belongs to the thiolase-like superfamily. Thiolase family.</text>
</comment>
<dbReference type="EC" id="2.3.1.9"/>
<dbReference type="EMBL" id="U17226">
    <property type="protein sequence ID" value="AAA90982.1"/>
    <property type="molecule type" value="Genomic_DNA"/>
</dbReference>
<dbReference type="EMBL" id="AL591688">
    <property type="protein sequence ID" value="CAC47841.1"/>
    <property type="molecule type" value="Genomic_DNA"/>
</dbReference>
<dbReference type="RefSeq" id="NP_387368.1">
    <property type="nucleotide sequence ID" value="NC_003047.1"/>
</dbReference>
<dbReference type="RefSeq" id="WP_010970528.1">
    <property type="nucleotide sequence ID" value="NC_003047.1"/>
</dbReference>
<dbReference type="SMR" id="P50174"/>
<dbReference type="EnsemblBacteria" id="CAC47841">
    <property type="protein sequence ID" value="CAC47841"/>
    <property type="gene ID" value="SMc03879"/>
</dbReference>
<dbReference type="KEGG" id="sme:SMc03879"/>
<dbReference type="PATRIC" id="fig|266834.11.peg.4817"/>
<dbReference type="eggNOG" id="COG0183">
    <property type="taxonomic scope" value="Bacteria"/>
</dbReference>
<dbReference type="HOGENOM" id="CLU_031026_0_0_5"/>
<dbReference type="OrthoDB" id="9764638at2"/>
<dbReference type="UniPathway" id="UPA00058">
    <property type="reaction ID" value="UER00101"/>
</dbReference>
<dbReference type="UniPathway" id="UPA00917"/>
<dbReference type="Proteomes" id="UP000001976">
    <property type="component" value="Chromosome"/>
</dbReference>
<dbReference type="GO" id="GO:0005737">
    <property type="term" value="C:cytoplasm"/>
    <property type="evidence" value="ECO:0007669"/>
    <property type="project" value="UniProtKB-SubCell"/>
</dbReference>
<dbReference type="GO" id="GO:0003985">
    <property type="term" value="F:acetyl-CoA C-acetyltransferase activity"/>
    <property type="evidence" value="ECO:0007669"/>
    <property type="project" value="UniProtKB-EC"/>
</dbReference>
<dbReference type="GO" id="GO:0042619">
    <property type="term" value="P:poly-hydroxybutyrate biosynthetic process"/>
    <property type="evidence" value="ECO:0007669"/>
    <property type="project" value="UniProtKB-KW"/>
</dbReference>
<dbReference type="CDD" id="cd00751">
    <property type="entry name" value="thiolase"/>
    <property type="match status" value="1"/>
</dbReference>
<dbReference type="FunFam" id="3.40.47.10:FF:000010">
    <property type="entry name" value="Acetyl-CoA acetyltransferase (Thiolase)"/>
    <property type="match status" value="1"/>
</dbReference>
<dbReference type="Gene3D" id="3.40.47.10">
    <property type="match status" value="2"/>
</dbReference>
<dbReference type="InterPro" id="IPR002155">
    <property type="entry name" value="Thiolase"/>
</dbReference>
<dbReference type="InterPro" id="IPR016039">
    <property type="entry name" value="Thiolase-like"/>
</dbReference>
<dbReference type="InterPro" id="IPR020615">
    <property type="entry name" value="Thiolase_acyl_enz_int_AS"/>
</dbReference>
<dbReference type="InterPro" id="IPR020610">
    <property type="entry name" value="Thiolase_AS"/>
</dbReference>
<dbReference type="InterPro" id="IPR020617">
    <property type="entry name" value="Thiolase_C"/>
</dbReference>
<dbReference type="InterPro" id="IPR020613">
    <property type="entry name" value="Thiolase_CS"/>
</dbReference>
<dbReference type="InterPro" id="IPR020616">
    <property type="entry name" value="Thiolase_N"/>
</dbReference>
<dbReference type="NCBIfam" id="TIGR01930">
    <property type="entry name" value="AcCoA-C-Actrans"/>
    <property type="match status" value="1"/>
</dbReference>
<dbReference type="PANTHER" id="PTHR18919:SF107">
    <property type="entry name" value="ACETYL-COA ACETYLTRANSFERASE, CYTOSOLIC"/>
    <property type="match status" value="1"/>
</dbReference>
<dbReference type="PANTHER" id="PTHR18919">
    <property type="entry name" value="ACETYL-COA C-ACYLTRANSFERASE"/>
    <property type="match status" value="1"/>
</dbReference>
<dbReference type="Pfam" id="PF02803">
    <property type="entry name" value="Thiolase_C"/>
    <property type="match status" value="1"/>
</dbReference>
<dbReference type="Pfam" id="PF00108">
    <property type="entry name" value="Thiolase_N"/>
    <property type="match status" value="1"/>
</dbReference>
<dbReference type="PIRSF" id="PIRSF000429">
    <property type="entry name" value="Ac-CoA_Ac_transf"/>
    <property type="match status" value="1"/>
</dbReference>
<dbReference type="SUPFAM" id="SSF53901">
    <property type="entry name" value="Thiolase-like"/>
    <property type="match status" value="2"/>
</dbReference>
<dbReference type="PROSITE" id="PS00098">
    <property type="entry name" value="THIOLASE_1"/>
    <property type="match status" value="1"/>
</dbReference>
<dbReference type="PROSITE" id="PS00737">
    <property type="entry name" value="THIOLASE_2"/>
    <property type="match status" value="1"/>
</dbReference>
<dbReference type="PROSITE" id="PS00099">
    <property type="entry name" value="THIOLASE_3"/>
    <property type="match status" value="1"/>
</dbReference>
<reference key="1">
    <citation type="journal article" date="1995" name="Microbiology">
        <title>Poly-beta-hydroxybutyrate (PHB) biosynthetic genes in Rhizobium meliloti 41.</title>
        <authorList>
            <person name="Tombolini R."/>
            <person name="Povolo S."/>
            <person name="Buson A."/>
            <person name="Squartini A."/>
            <person name="Nuti M.P."/>
        </authorList>
    </citation>
    <scope>NUCLEOTIDE SEQUENCE [GENOMIC DNA]</scope>
    <scope>PATHWAY</scope>
    <source>
        <strain>41</strain>
    </source>
</reference>
<reference key="2">
    <citation type="journal article" date="2001" name="Proc. Natl. Acad. Sci. U.S.A.">
        <title>Analysis of the chromosome sequence of the legume symbiont Sinorhizobium meliloti strain 1021.</title>
        <authorList>
            <person name="Capela D."/>
            <person name="Barloy-Hubler F."/>
            <person name="Gouzy J."/>
            <person name="Bothe G."/>
            <person name="Ampe F."/>
            <person name="Batut J."/>
            <person name="Boistard P."/>
            <person name="Becker A."/>
            <person name="Boutry M."/>
            <person name="Cadieu E."/>
            <person name="Dreano S."/>
            <person name="Gloux S."/>
            <person name="Godrie T."/>
            <person name="Goffeau A."/>
            <person name="Kahn D."/>
            <person name="Kiss E."/>
            <person name="Lelaure V."/>
            <person name="Masuy D."/>
            <person name="Pohl T."/>
            <person name="Portetelle D."/>
            <person name="Puehler A."/>
            <person name="Purnelle B."/>
            <person name="Ramsperger U."/>
            <person name="Renard C."/>
            <person name="Thebault P."/>
            <person name="Vandenbol M."/>
            <person name="Weidner S."/>
            <person name="Galibert F."/>
        </authorList>
    </citation>
    <scope>NUCLEOTIDE SEQUENCE [LARGE SCALE GENOMIC DNA]</scope>
    <source>
        <strain>1021</strain>
    </source>
</reference>
<reference key="3">
    <citation type="journal article" date="2001" name="Science">
        <title>The composite genome of the legume symbiont Sinorhizobium meliloti.</title>
        <authorList>
            <person name="Galibert F."/>
            <person name="Finan T.M."/>
            <person name="Long S.R."/>
            <person name="Puehler A."/>
            <person name="Abola P."/>
            <person name="Ampe F."/>
            <person name="Barloy-Hubler F."/>
            <person name="Barnett M.J."/>
            <person name="Becker A."/>
            <person name="Boistard P."/>
            <person name="Bothe G."/>
            <person name="Boutry M."/>
            <person name="Bowser L."/>
            <person name="Buhrmester J."/>
            <person name="Cadieu E."/>
            <person name="Capela D."/>
            <person name="Chain P."/>
            <person name="Cowie A."/>
            <person name="Davis R.W."/>
            <person name="Dreano S."/>
            <person name="Federspiel N.A."/>
            <person name="Fisher R.F."/>
            <person name="Gloux S."/>
            <person name="Godrie T."/>
            <person name="Goffeau A."/>
            <person name="Golding B."/>
            <person name="Gouzy J."/>
            <person name="Gurjal M."/>
            <person name="Hernandez-Lucas I."/>
            <person name="Hong A."/>
            <person name="Huizar L."/>
            <person name="Hyman R.W."/>
            <person name="Jones T."/>
            <person name="Kahn D."/>
            <person name="Kahn M.L."/>
            <person name="Kalman S."/>
            <person name="Keating D.H."/>
            <person name="Kiss E."/>
            <person name="Komp C."/>
            <person name="Lelaure V."/>
            <person name="Masuy D."/>
            <person name="Palm C."/>
            <person name="Peck M.C."/>
            <person name="Pohl T.M."/>
            <person name="Portetelle D."/>
            <person name="Purnelle B."/>
            <person name="Ramsperger U."/>
            <person name="Surzycki R."/>
            <person name="Thebault P."/>
            <person name="Vandenbol M."/>
            <person name="Vorhoelter F.J."/>
            <person name="Weidner S."/>
            <person name="Wells D.H."/>
            <person name="Wong K."/>
            <person name="Yeh K.-C."/>
            <person name="Batut J."/>
        </authorList>
    </citation>
    <scope>NUCLEOTIDE SEQUENCE [LARGE SCALE GENOMIC DNA]</scope>
    <source>
        <strain>1021</strain>
    </source>
</reference>
<gene>
    <name evidence="5" type="primary">phaA</name>
    <name type="ordered locus">R03262</name>
    <name type="ORF">SMc03879</name>
</gene>
<proteinExistence type="inferred from homology"/>
<organism>
    <name type="scientific">Rhizobium meliloti (strain 1021)</name>
    <name type="common">Ensifer meliloti</name>
    <name type="synonym">Sinorhizobium meliloti</name>
    <dbReference type="NCBI Taxonomy" id="266834"/>
    <lineage>
        <taxon>Bacteria</taxon>
        <taxon>Pseudomonadati</taxon>
        <taxon>Pseudomonadota</taxon>
        <taxon>Alphaproteobacteria</taxon>
        <taxon>Hyphomicrobiales</taxon>
        <taxon>Rhizobiaceae</taxon>
        <taxon>Sinorhizobium/Ensifer group</taxon>
        <taxon>Sinorhizobium</taxon>
    </lineage>
</organism>
<accession>P50174</accession>
<sequence>MSNPSIVIASAARTAVGSFNGAFGNTLAHELGAAAIKAVLERAGVEAGEVDEVILGQVLPAGEGQNPARQAAMKAGLPQEKTAWGMNQLCGSGLRAVALGMQQIATGDAKVIVAGGMESMSMAPHCAHLRGGVKMGDYKMIDTMIKDGLTDAFYGYHMGITAENVARKWQLTREEQDEFALASQNKAEAAQKAGRFADEIVPFVVKTRKGDVNVDQDEYIRHGATLDSIAKLRPAFDKEGTVTAGNASGLNDGAAAALLMTEAEAARRGIQPLARIVSWATAGVDPQIMGTGPIPASRKALEKAGWSVADIELVEANEAFAAQACAVNKDLGWDPSIVNVNGGAIAIGHPIGASGARVLNTLLFEMKRRGVSKGLATLCIGGGMGVAMCVERL</sequence>
<keyword id="KW-0012">Acyltransferase</keyword>
<keyword id="KW-0963">Cytoplasm</keyword>
<keyword id="KW-0583">PHB biosynthesis</keyword>
<keyword id="KW-1185">Reference proteome</keyword>
<keyword id="KW-0808">Transferase</keyword>
<protein>
    <recommendedName>
        <fullName>Acetyl-CoA acetyltransferase</fullName>
        <ecNumber>2.3.1.9</ecNumber>
    </recommendedName>
    <alternativeName>
        <fullName>Acetoacetyl-CoA thiolase</fullName>
    </alternativeName>
    <alternativeName>
        <fullName evidence="5">Beta-ketothiolase</fullName>
    </alternativeName>
</protein>
<feature type="chain" id="PRO_0000206461" description="Acetyl-CoA acetyltransferase">
    <location>
        <begin position="1"/>
        <end position="393"/>
    </location>
</feature>
<feature type="active site" description="Acyl-thioester intermediate" evidence="1">
    <location>
        <position position="90"/>
    </location>
</feature>
<feature type="active site" description="Proton acceptor" evidence="3">
    <location>
        <position position="349"/>
    </location>
</feature>
<feature type="active site" description="Proton acceptor" evidence="3">
    <location>
        <position position="379"/>
    </location>
</feature>
<name>THIL_RHIME</name>
<evidence type="ECO:0000250" key="1"/>
<evidence type="ECO:0000250" key="2">
    <source>
        <dbReference type="UniProtKB" id="P14611"/>
    </source>
</evidence>
<evidence type="ECO:0000255" key="3">
    <source>
        <dbReference type="PROSITE-ProRule" id="PRU10020"/>
    </source>
</evidence>
<evidence type="ECO:0000269" key="4">
    <source>
    </source>
</evidence>
<evidence type="ECO:0000303" key="5">
    <source>
    </source>
</evidence>
<evidence type="ECO:0000305" key="6"/>